<keyword id="KW-0251">Elongation factor</keyword>
<keyword id="KW-0496">Mitochondrion</keyword>
<keyword id="KW-0648">Protein biosynthesis</keyword>
<keyword id="KW-1185">Reference proteome</keyword>
<keyword id="KW-0809">Transit peptide</keyword>
<dbReference type="EMBL" id="DS547091">
    <property type="protein sequence ID" value="EDR15835.1"/>
    <property type="molecule type" value="Genomic_DNA"/>
</dbReference>
<dbReference type="RefSeq" id="XP_001874043.1">
    <property type="nucleotide sequence ID" value="XM_001874008.1"/>
</dbReference>
<dbReference type="SMR" id="B0CRK4"/>
<dbReference type="FunCoup" id="B0CRK4">
    <property type="interactions" value="279"/>
</dbReference>
<dbReference type="STRING" id="486041.B0CRK4"/>
<dbReference type="GeneID" id="6069024"/>
<dbReference type="KEGG" id="lbc:LACBIDRAFT_301194"/>
<dbReference type="HOGENOM" id="CLU_047155_4_1_1"/>
<dbReference type="InParanoid" id="B0CRK4"/>
<dbReference type="OrthoDB" id="277235at2759"/>
<dbReference type="Proteomes" id="UP000001194">
    <property type="component" value="Unassembled WGS sequence"/>
</dbReference>
<dbReference type="GO" id="GO:0005739">
    <property type="term" value="C:mitochondrion"/>
    <property type="evidence" value="ECO:0007669"/>
    <property type="project" value="UniProtKB-SubCell"/>
</dbReference>
<dbReference type="GO" id="GO:0003746">
    <property type="term" value="F:translation elongation factor activity"/>
    <property type="evidence" value="ECO:0007669"/>
    <property type="project" value="UniProtKB-UniRule"/>
</dbReference>
<dbReference type="GO" id="GO:0070125">
    <property type="term" value="P:mitochondrial translational elongation"/>
    <property type="evidence" value="ECO:0007669"/>
    <property type="project" value="TreeGrafter"/>
</dbReference>
<dbReference type="CDD" id="cd14275">
    <property type="entry name" value="UBA_EF-Ts"/>
    <property type="match status" value="1"/>
</dbReference>
<dbReference type="Gene3D" id="1.10.8.10">
    <property type="entry name" value="DNA helicase RuvA subunit, C-terminal domain"/>
    <property type="match status" value="1"/>
</dbReference>
<dbReference type="Gene3D" id="3.30.479.20">
    <property type="entry name" value="Elongation factor Ts, dimerisation domain"/>
    <property type="match status" value="2"/>
</dbReference>
<dbReference type="HAMAP" id="MF_00050">
    <property type="entry name" value="EF_Ts"/>
    <property type="match status" value="1"/>
</dbReference>
<dbReference type="InterPro" id="IPR036402">
    <property type="entry name" value="EF-Ts_dimer_sf"/>
</dbReference>
<dbReference type="InterPro" id="IPR001816">
    <property type="entry name" value="Transl_elong_EFTs/EF1B"/>
</dbReference>
<dbReference type="InterPro" id="IPR014039">
    <property type="entry name" value="Transl_elong_EFTs/EF1B_dimer"/>
</dbReference>
<dbReference type="InterPro" id="IPR009060">
    <property type="entry name" value="UBA-like_sf"/>
</dbReference>
<dbReference type="PANTHER" id="PTHR11741">
    <property type="entry name" value="ELONGATION FACTOR TS"/>
    <property type="match status" value="1"/>
</dbReference>
<dbReference type="PANTHER" id="PTHR11741:SF0">
    <property type="entry name" value="ELONGATION FACTOR TS, MITOCHONDRIAL"/>
    <property type="match status" value="1"/>
</dbReference>
<dbReference type="Pfam" id="PF00889">
    <property type="entry name" value="EF_TS"/>
    <property type="match status" value="1"/>
</dbReference>
<dbReference type="SUPFAM" id="SSF54713">
    <property type="entry name" value="Elongation factor Ts (EF-Ts), dimerisation domain"/>
    <property type="match status" value="1"/>
</dbReference>
<dbReference type="SUPFAM" id="SSF46934">
    <property type="entry name" value="UBA-like"/>
    <property type="match status" value="1"/>
</dbReference>
<organism>
    <name type="scientific">Laccaria bicolor (strain S238N-H82 / ATCC MYA-4686)</name>
    <name type="common">Bicoloured deceiver</name>
    <name type="synonym">Laccaria laccata var. bicolor</name>
    <dbReference type="NCBI Taxonomy" id="486041"/>
    <lineage>
        <taxon>Eukaryota</taxon>
        <taxon>Fungi</taxon>
        <taxon>Dikarya</taxon>
        <taxon>Basidiomycota</taxon>
        <taxon>Agaricomycotina</taxon>
        <taxon>Agaricomycetes</taxon>
        <taxon>Agaricomycetidae</taxon>
        <taxon>Agaricales</taxon>
        <taxon>Agaricineae</taxon>
        <taxon>Hydnangiaceae</taxon>
        <taxon>Laccaria</taxon>
    </lineage>
</organism>
<comment type="function">
    <text evidence="1">Associates with the EF-Tu.GDP complex and induces the exchange of GDP to GTP. It remains bound to the aminoacyl-tRNA.EF-Tu.GTP complex up to the GTP hydrolysis stage on the ribosome.</text>
</comment>
<comment type="subcellular location">
    <subcellularLocation>
        <location evidence="1">Mitochondrion</location>
    </subcellularLocation>
</comment>
<comment type="similarity">
    <text evidence="1">Belongs to the EF-Ts family.</text>
</comment>
<name>EFTS_LACBS</name>
<gene>
    <name evidence="1" type="primary">TSF1</name>
    <name type="ORF">LACBIDRAFT_301194</name>
</gene>
<protein>
    <recommendedName>
        <fullName evidence="1">Elongation factor Ts, mitochondrial</fullName>
        <shortName evidence="1">EF-Ts</shortName>
        <shortName evidence="1">EF-TsMt</shortName>
    </recommendedName>
</protein>
<accession>B0CRK4</accession>
<sequence length="330" mass="35917">MYRNCRKAFTFSLRHYSTAPTEKPSLKLVAELRKRTEVSITKAREALSASNNDVSAALEWLQKDLITSGAKKAAKLGGRPTPEGLISVSVLSRGGESHVAGVRAAMIELNCETDFVGRNELFGRLAADIAHTAAYISDRTGSATAFNRAFPLDVLKDAPLLSQLNPTAPPTGTVGSSIRDMISKVGENVSLRRALAVVENSPSPNGDIALRIGSYVHDYKIGSLALLALKSRGISSSLNSDAFRERLEFLERALARQILGFETTSVNSSEDQTSLYNQPFMMFSREMDSPLVGEVLRNWSEKEGLLKENSDGGVAVLDFAKWKVGETFDE</sequence>
<proteinExistence type="inferred from homology"/>
<feature type="transit peptide" description="Mitochondrion" evidence="1">
    <location>
        <begin position="1"/>
        <end position="16"/>
    </location>
</feature>
<feature type="chain" id="PRO_0000402345" description="Elongation factor Ts, mitochondrial">
    <location>
        <begin position="17"/>
        <end position="330"/>
    </location>
</feature>
<reference key="1">
    <citation type="journal article" date="2008" name="Nature">
        <title>The genome of Laccaria bicolor provides insights into mycorrhizal symbiosis.</title>
        <authorList>
            <person name="Martin F."/>
            <person name="Aerts A."/>
            <person name="Ahren D."/>
            <person name="Brun A."/>
            <person name="Danchin E.G.J."/>
            <person name="Duchaussoy F."/>
            <person name="Gibon J."/>
            <person name="Kohler A."/>
            <person name="Lindquist E."/>
            <person name="Pereda V."/>
            <person name="Salamov A."/>
            <person name="Shapiro H.J."/>
            <person name="Wuyts J."/>
            <person name="Blaudez D."/>
            <person name="Buee M."/>
            <person name="Brokstein P."/>
            <person name="Canbaeck B."/>
            <person name="Cohen D."/>
            <person name="Courty P.E."/>
            <person name="Coutinho P.M."/>
            <person name="Delaruelle C."/>
            <person name="Detter J.C."/>
            <person name="Deveau A."/>
            <person name="DiFazio S."/>
            <person name="Duplessis S."/>
            <person name="Fraissinet-Tachet L."/>
            <person name="Lucic E."/>
            <person name="Frey-Klett P."/>
            <person name="Fourrey C."/>
            <person name="Feussner I."/>
            <person name="Gay G."/>
            <person name="Grimwood J."/>
            <person name="Hoegger P.J."/>
            <person name="Jain P."/>
            <person name="Kilaru S."/>
            <person name="Labbe J."/>
            <person name="Lin Y.C."/>
            <person name="Legue V."/>
            <person name="Le Tacon F."/>
            <person name="Marmeisse R."/>
            <person name="Melayah D."/>
            <person name="Montanini B."/>
            <person name="Muratet M."/>
            <person name="Nehls U."/>
            <person name="Niculita-Hirzel H."/>
            <person name="Oudot-Le Secq M.P."/>
            <person name="Peter M."/>
            <person name="Quesneville H."/>
            <person name="Rajashekar B."/>
            <person name="Reich M."/>
            <person name="Rouhier N."/>
            <person name="Schmutz J."/>
            <person name="Yin T."/>
            <person name="Chalot M."/>
            <person name="Henrissat B."/>
            <person name="Kuees U."/>
            <person name="Lucas S."/>
            <person name="Van de Peer Y."/>
            <person name="Podila G.K."/>
            <person name="Polle A."/>
            <person name="Pukkila P.J."/>
            <person name="Richardson P.M."/>
            <person name="Rouze P."/>
            <person name="Sanders I.R."/>
            <person name="Stajich J.E."/>
            <person name="Tunlid A."/>
            <person name="Tuskan G."/>
            <person name="Grigoriev I.V."/>
        </authorList>
    </citation>
    <scope>NUCLEOTIDE SEQUENCE [LARGE SCALE GENOMIC DNA]</scope>
    <source>
        <strain>S238N-H82 / ATCC MYA-4686</strain>
    </source>
</reference>
<evidence type="ECO:0000255" key="1">
    <source>
        <dbReference type="HAMAP-Rule" id="MF_03135"/>
    </source>
</evidence>